<comment type="function">
    <text evidence="1">Involved in peptide bond synthesis. Stimulates efficient translation and peptide-bond synthesis on native or reconstituted 70S ribosomes in vitro. Probably functions indirectly by altering the affinity of the ribosome for aminoacyl-tRNA, thus increasing their reactivity as acceptors for peptidyl transferase.</text>
</comment>
<comment type="pathway">
    <text evidence="1">Protein biosynthesis; polypeptide chain elongation.</text>
</comment>
<comment type="subcellular location">
    <subcellularLocation>
        <location evidence="1">Cytoplasm</location>
    </subcellularLocation>
</comment>
<comment type="similarity">
    <text evidence="1">Belongs to the elongation factor P family.</text>
</comment>
<keyword id="KW-0963">Cytoplasm</keyword>
<keyword id="KW-0251">Elongation factor</keyword>
<keyword id="KW-0648">Protein biosynthesis</keyword>
<protein>
    <recommendedName>
        <fullName evidence="1">Elongation factor P</fullName>
        <shortName evidence="1">EF-P</shortName>
    </recommendedName>
</protein>
<evidence type="ECO:0000255" key="1">
    <source>
        <dbReference type="HAMAP-Rule" id="MF_00141"/>
    </source>
</evidence>
<proteinExistence type="inferred from homology"/>
<reference key="1">
    <citation type="submission" date="2008-05" db="EMBL/GenBank/DDBJ databases">
        <title>Complete sequence of chromosome 1 of Ralstonia pickettii 12J.</title>
        <authorList>
            <person name="Lucas S."/>
            <person name="Copeland A."/>
            <person name="Lapidus A."/>
            <person name="Glavina del Rio T."/>
            <person name="Dalin E."/>
            <person name="Tice H."/>
            <person name="Bruce D."/>
            <person name="Goodwin L."/>
            <person name="Pitluck S."/>
            <person name="Meincke L."/>
            <person name="Brettin T."/>
            <person name="Detter J.C."/>
            <person name="Han C."/>
            <person name="Kuske C.R."/>
            <person name="Schmutz J."/>
            <person name="Larimer F."/>
            <person name="Land M."/>
            <person name="Hauser L."/>
            <person name="Kyrpides N."/>
            <person name="Mikhailova N."/>
            <person name="Marsh T."/>
            <person name="Richardson P."/>
        </authorList>
    </citation>
    <scope>NUCLEOTIDE SEQUENCE [LARGE SCALE GENOMIC DNA]</scope>
    <source>
        <strain>12J</strain>
    </source>
</reference>
<feature type="chain" id="PRO_1000096192" description="Elongation factor P">
    <location>
        <begin position="1"/>
        <end position="191"/>
    </location>
</feature>
<accession>B2U987</accession>
<dbReference type="EMBL" id="CP001068">
    <property type="protein sequence ID" value="ACD26084.1"/>
    <property type="molecule type" value="Genomic_DNA"/>
</dbReference>
<dbReference type="SMR" id="B2U987"/>
<dbReference type="STRING" id="402626.Rpic_0934"/>
<dbReference type="KEGG" id="rpi:Rpic_0934"/>
<dbReference type="eggNOG" id="COG0231">
    <property type="taxonomic scope" value="Bacteria"/>
</dbReference>
<dbReference type="HOGENOM" id="CLU_074944_2_1_4"/>
<dbReference type="UniPathway" id="UPA00345"/>
<dbReference type="GO" id="GO:0005737">
    <property type="term" value="C:cytoplasm"/>
    <property type="evidence" value="ECO:0007669"/>
    <property type="project" value="UniProtKB-SubCell"/>
</dbReference>
<dbReference type="GO" id="GO:0003746">
    <property type="term" value="F:translation elongation factor activity"/>
    <property type="evidence" value="ECO:0007669"/>
    <property type="project" value="UniProtKB-UniRule"/>
</dbReference>
<dbReference type="GO" id="GO:0043043">
    <property type="term" value="P:peptide biosynthetic process"/>
    <property type="evidence" value="ECO:0007669"/>
    <property type="project" value="InterPro"/>
</dbReference>
<dbReference type="CDD" id="cd04470">
    <property type="entry name" value="S1_EF-P_repeat_1"/>
    <property type="match status" value="1"/>
</dbReference>
<dbReference type="CDD" id="cd05794">
    <property type="entry name" value="S1_EF-P_repeat_2"/>
    <property type="match status" value="1"/>
</dbReference>
<dbReference type="FunFam" id="2.30.30.30:FF:000003">
    <property type="entry name" value="Elongation factor P"/>
    <property type="match status" value="1"/>
</dbReference>
<dbReference type="FunFam" id="2.40.50.140:FF:000004">
    <property type="entry name" value="Elongation factor P"/>
    <property type="match status" value="1"/>
</dbReference>
<dbReference type="FunFam" id="2.40.50.140:FF:000009">
    <property type="entry name" value="Elongation factor P"/>
    <property type="match status" value="1"/>
</dbReference>
<dbReference type="Gene3D" id="2.30.30.30">
    <property type="match status" value="1"/>
</dbReference>
<dbReference type="Gene3D" id="2.40.50.140">
    <property type="entry name" value="Nucleic acid-binding proteins"/>
    <property type="match status" value="2"/>
</dbReference>
<dbReference type="HAMAP" id="MF_00141">
    <property type="entry name" value="EF_P"/>
    <property type="match status" value="1"/>
</dbReference>
<dbReference type="InterPro" id="IPR015365">
    <property type="entry name" value="Elong-fact-P_C"/>
</dbReference>
<dbReference type="InterPro" id="IPR012340">
    <property type="entry name" value="NA-bd_OB-fold"/>
</dbReference>
<dbReference type="InterPro" id="IPR014722">
    <property type="entry name" value="Rib_uL2_dom2"/>
</dbReference>
<dbReference type="InterPro" id="IPR020599">
    <property type="entry name" value="Transl_elong_fac_P/YeiP"/>
</dbReference>
<dbReference type="InterPro" id="IPR013185">
    <property type="entry name" value="Transl_elong_KOW-like"/>
</dbReference>
<dbReference type="InterPro" id="IPR001059">
    <property type="entry name" value="Transl_elong_P/YeiP_cen"/>
</dbReference>
<dbReference type="InterPro" id="IPR011768">
    <property type="entry name" value="Transl_elongation_fac_P"/>
</dbReference>
<dbReference type="InterPro" id="IPR008991">
    <property type="entry name" value="Translation_prot_SH3-like_sf"/>
</dbReference>
<dbReference type="NCBIfam" id="TIGR00038">
    <property type="entry name" value="efp"/>
    <property type="match status" value="1"/>
</dbReference>
<dbReference type="NCBIfam" id="NF001810">
    <property type="entry name" value="PRK00529.1"/>
    <property type="match status" value="1"/>
</dbReference>
<dbReference type="PANTHER" id="PTHR30053">
    <property type="entry name" value="ELONGATION FACTOR P"/>
    <property type="match status" value="1"/>
</dbReference>
<dbReference type="PANTHER" id="PTHR30053:SF12">
    <property type="entry name" value="ELONGATION FACTOR P (EF-P) FAMILY PROTEIN"/>
    <property type="match status" value="1"/>
</dbReference>
<dbReference type="Pfam" id="PF01132">
    <property type="entry name" value="EFP"/>
    <property type="match status" value="1"/>
</dbReference>
<dbReference type="Pfam" id="PF08207">
    <property type="entry name" value="EFP_N"/>
    <property type="match status" value="1"/>
</dbReference>
<dbReference type="Pfam" id="PF09285">
    <property type="entry name" value="Elong-fact-P_C"/>
    <property type="match status" value="1"/>
</dbReference>
<dbReference type="PIRSF" id="PIRSF005901">
    <property type="entry name" value="EF-P"/>
    <property type="match status" value="1"/>
</dbReference>
<dbReference type="SMART" id="SM01185">
    <property type="entry name" value="EFP"/>
    <property type="match status" value="1"/>
</dbReference>
<dbReference type="SMART" id="SM00841">
    <property type="entry name" value="Elong-fact-P_C"/>
    <property type="match status" value="1"/>
</dbReference>
<dbReference type="SUPFAM" id="SSF50249">
    <property type="entry name" value="Nucleic acid-binding proteins"/>
    <property type="match status" value="2"/>
</dbReference>
<dbReference type="SUPFAM" id="SSF50104">
    <property type="entry name" value="Translation proteins SH3-like domain"/>
    <property type="match status" value="1"/>
</dbReference>
<sequence>MALKIAQELRAGNVFMIGNDAMVVLKTEYSRSGRSGAVVKMKYKNLLTGAGGESVFNADDKMDQVILEKKEAEYSYFDGTMYVFMDPVTYEQYNVEPAAMGSALNYLQDGMKVEVTFYNENAISVELPTTVVREIVYTEPAVKGDTSSGKVLKAARINDNEEFTIMVPLFCNIGEKIEIDTRTDEYRSRAK</sequence>
<gene>
    <name evidence="1" type="primary">efp</name>
    <name type="ordered locus">Rpic_0934</name>
</gene>
<name>EFP_RALPJ</name>
<organism>
    <name type="scientific">Ralstonia pickettii (strain 12J)</name>
    <dbReference type="NCBI Taxonomy" id="402626"/>
    <lineage>
        <taxon>Bacteria</taxon>
        <taxon>Pseudomonadati</taxon>
        <taxon>Pseudomonadota</taxon>
        <taxon>Betaproteobacteria</taxon>
        <taxon>Burkholderiales</taxon>
        <taxon>Burkholderiaceae</taxon>
        <taxon>Ralstonia</taxon>
    </lineage>
</organism>